<protein>
    <recommendedName>
        <fullName evidence="1">Cyclic pyranopterin monophosphate synthase</fullName>
        <ecNumber evidence="1">4.6.1.17</ecNumber>
    </recommendedName>
    <alternativeName>
        <fullName evidence="1">Molybdenum cofactor biosynthesis protein C</fullName>
    </alternativeName>
</protein>
<keyword id="KW-0456">Lyase</keyword>
<keyword id="KW-0501">Molybdenum cofactor biosynthesis</keyword>
<keyword id="KW-1185">Reference proteome</keyword>
<sequence>MTELTHINQNGEANMVDVSGKQDTVREARAEAFIGMNAETLQMIMSGNHHKGDVFATARIAGIQAAKRTWELIPLCHPLLLSKVEVNLTALPESNQVRIESLCKLTGKTGVEMEALTAASVAALTIYDMCKAVQKDMVISQVRLLEKCGGKSGHFVAA</sequence>
<organism>
    <name type="scientific">Actinobacillus succinogenes (strain ATCC 55618 / DSM 22257 / CCUG 43843 / 130Z)</name>
    <dbReference type="NCBI Taxonomy" id="339671"/>
    <lineage>
        <taxon>Bacteria</taxon>
        <taxon>Pseudomonadati</taxon>
        <taxon>Pseudomonadota</taxon>
        <taxon>Gammaproteobacteria</taxon>
        <taxon>Pasteurellales</taxon>
        <taxon>Pasteurellaceae</taxon>
        <taxon>Actinobacillus</taxon>
    </lineage>
</organism>
<proteinExistence type="inferred from homology"/>
<gene>
    <name evidence="1" type="primary">moaC</name>
    <name type="ordered locus">Asuc_1676</name>
</gene>
<reference key="1">
    <citation type="journal article" date="2010" name="BMC Genomics">
        <title>A genomic perspective on the potential of Actinobacillus succinogenes for industrial succinate production.</title>
        <authorList>
            <person name="McKinlay J.B."/>
            <person name="Laivenieks M."/>
            <person name="Schindler B.D."/>
            <person name="McKinlay A.A."/>
            <person name="Siddaramappa S."/>
            <person name="Challacombe J.F."/>
            <person name="Lowry S.R."/>
            <person name="Clum A."/>
            <person name="Lapidus A.L."/>
            <person name="Burkhart K.B."/>
            <person name="Harkins V."/>
            <person name="Vieille C."/>
        </authorList>
    </citation>
    <scope>NUCLEOTIDE SEQUENCE [LARGE SCALE GENOMIC DNA]</scope>
    <source>
        <strain>ATCC 55618 / DSM 22257 / CCUG 43843 / 130Z</strain>
    </source>
</reference>
<accession>A6VPY1</accession>
<dbReference type="EC" id="4.6.1.17" evidence="1"/>
<dbReference type="EMBL" id="CP000746">
    <property type="protein sequence ID" value="ABR75028.1"/>
    <property type="molecule type" value="Genomic_DNA"/>
</dbReference>
<dbReference type="RefSeq" id="WP_012073405.1">
    <property type="nucleotide sequence ID" value="NC_009655.1"/>
</dbReference>
<dbReference type="SMR" id="A6VPY1"/>
<dbReference type="STRING" id="339671.Asuc_1676"/>
<dbReference type="KEGG" id="asu:Asuc_1676"/>
<dbReference type="eggNOG" id="COG0315">
    <property type="taxonomic scope" value="Bacteria"/>
</dbReference>
<dbReference type="HOGENOM" id="CLU_074693_1_1_6"/>
<dbReference type="OrthoDB" id="9794429at2"/>
<dbReference type="UniPathway" id="UPA00344"/>
<dbReference type="Proteomes" id="UP000001114">
    <property type="component" value="Chromosome"/>
</dbReference>
<dbReference type="GO" id="GO:0061799">
    <property type="term" value="F:cyclic pyranopterin monophosphate synthase activity"/>
    <property type="evidence" value="ECO:0007669"/>
    <property type="project" value="UniProtKB-UniRule"/>
</dbReference>
<dbReference type="GO" id="GO:0061798">
    <property type="term" value="F:GTP 3',8'-cyclase activity"/>
    <property type="evidence" value="ECO:0007669"/>
    <property type="project" value="TreeGrafter"/>
</dbReference>
<dbReference type="GO" id="GO:0006777">
    <property type="term" value="P:Mo-molybdopterin cofactor biosynthetic process"/>
    <property type="evidence" value="ECO:0007669"/>
    <property type="project" value="UniProtKB-UniRule"/>
</dbReference>
<dbReference type="CDD" id="cd01420">
    <property type="entry name" value="MoaC_PE"/>
    <property type="match status" value="1"/>
</dbReference>
<dbReference type="FunFam" id="3.30.70.640:FF:000001">
    <property type="entry name" value="Cyclic pyranopterin monophosphate synthase"/>
    <property type="match status" value="1"/>
</dbReference>
<dbReference type="Gene3D" id="3.30.70.640">
    <property type="entry name" value="Molybdopterin cofactor biosynthesis C (MoaC) domain"/>
    <property type="match status" value="1"/>
</dbReference>
<dbReference type="HAMAP" id="MF_01224_B">
    <property type="entry name" value="MoaC_B"/>
    <property type="match status" value="1"/>
</dbReference>
<dbReference type="InterPro" id="IPR023045">
    <property type="entry name" value="MoaC"/>
</dbReference>
<dbReference type="InterPro" id="IPR047594">
    <property type="entry name" value="MoaC_bact/euk"/>
</dbReference>
<dbReference type="InterPro" id="IPR036522">
    <property type="entry name" value="MoaC_sf"/>
</dbReference>
<dbReference type="InterPro" id="IPR050105">
    <property type="entry name" value="MoCo_biosynth_MoaA/MoaC"/>
</dbReference>
<dbReference type="InterPro" id="IPR002820">
    <property type="entry name" value="Mopterin_CF_biosynth-C_dom"/>
</dbReference>
<dbReference type="NCBIfam" id="TIGR00581">
    <property type="entry name" value="moaC"/>
    <property type="match status" value="1"/>
</dbReference>
<dbReference type="NCBIfam" id="NF006870">
    <property type="entry name" value="PRK09364.1"/>
    <property type="match status" value="1"/>
</dbReference>
<dbReference type="PANTHER" id="PTHR22960:SF0">
    <property type="entry name" value="MOLYBDENUM COFACTOR BIOSYNTHESIS PROTEIN 1"/>
    <property type="match status" value="1"/>
</dbReference>
<dbReference type="PANTHER" id="PTHR22960">
    <property type="entry name" value="MOLYBDOPTERIN COFACTOR SYNTHESIS PROTEIN A"/>
    <property type="match status" value="1"/>
</dbReference>
<dbReference type="Pfam" id="PF01967">
    <property type="entry name" value="MoaC"/>
    <property type="match status" value="1"/>
</dbReference>
<dbReference type="SUPFAM" id="SSF55040">
    <property type="entry name" value="Molybdenum cofactor biosynthesis protein C, MoaC"/>
    <property type="match status" value="1"/>
</dbReference>
<feature type="chain" id="PRO_1000073151" description="Cyclic pyranopterin monophosphate synthase">
    <location>
        <begin position="1"/>
        <end position="158"/>
    </location>
</feature>
<feature type="active site" evidence="1">
    <location>
        <position position="128"/>
    </location>
</feature>
<feature type="binding site" evidence="1">
    <location>
        <begin position="75"/>
        <end position="77"/>
    </location>
    <ligand>
        <name>substrate</name>
    </ligand>
</feature>
<feature type="binding site" evidence="1">
    <location>
        <begin position="113"/>
        <end position="114"/>
    </location>
    <ligand>
        <name>substrate</name>
    </ligand>
</feature>
<comment type="function">
    <text evidence="1">Catalyzes the conversion of (8S)-3',8-cyclo-7,8-dihydroguanosine 5'-triphosphate to cyclic pyranopterin monophosphate (cPMP).</text>
</comment>
<comment type="catalytic activity">
    <reaction evidence="1">
        <text>(8S)-3',8-cyclo-7,8-dihydroguanosine 5'-triphosphate = cyclic pyranopterin phosphate + diphosphate</text>
        <dbReference type="Rhea" id="RHEA:49580"/>
        <dbReference type="ChEBI" id="CHEBI:33019"/>
        <dbReference type="ChEBI" id="CHEBI:59648"/>
        <dbReference type="ChEBI" id="CHEBI:131766"/>
        <dbReference type="EC" id="4.6.1.17"/>
    </reaction>
</comment>
<comment type="pathway">
    <text evidence="1">Cofactor biosynthesis; molybdopterin biosynthesis.</text>
</comment>
<comment type="subunit">
    <text evidence="1">Homohexamer; trimer of dimers.</text>
</comment>
<comment type="similarity">
    <text evidence="1">Belongs to the MoaC family.</text>
</comment>
<evidence type="ECO:0000255" key="1">
    <source>
        <dbReference type="HAMAP-Rule" id="MF_01224"/>
    </source>
</evidence>
<name>MOAC_ACTSZ</name>